<organism>
    <name type="scientific">Synechococcus elongatus (strain ATCC 33912 / PCC 7942 / FACHB-805)</name>
    <name type="common">Anacystis nidulans R2</name>
    <dbReference type="NCBI Taxonomy" id="1140"/>
    <lineage>
        <taxon>Bacteria</taxon>
        <taxon>Bacillati</taxon>
        <taxon>Cyanobacteriota</taxon>
        <taxon>Cyanophyceae</taxon>
        <taxon>Synechococcales</taxon>
        <taxon>Synechococcaceae</taxon>
        <taxon>Synechococcus</taxon>
    </lineage>
</organism>
<name>SURE_SYNE7</name>
<feature type="chain" id="PRO_0000235658" description="5'-nucleotidase SurE">
    <location>
        <begin position="1"/>
        <end position="258"/>
    </location>
</feature>
<feature type="binding site" evidence="1">
    <location>
        <position position="8"/>
    </location>
    <ligand>
        <name>a divalent metal cation</name>
        <dbReference type="ChEBI" id="CHEBI:60240"/>
    </ligand>
</feature>
<feature type="binding site" evidence="1">
    <location>
        <position position="9"/>
    </location>
    <ligand>
        <name>a divalent metal cation</name>
        <dbReference type="ChEBI" id="CHEBI:60240"/>
    </ligand>
</feature>
<feature type="binding site" evidence="1">
    <location>
        <position position="40"/>
    </location>
    <ligand>
        <name>a divalent metal cation</name>
        <dbReference type="ChEBI" id="CHEBI:60240"/>
    </ligand>
</feature>
<feature type="binding site" evidence="1">
    <location>
        <position position="98"/>
    </location>
    <ligand>
        <name>a divalent metal cation</name>
        <dbReference type="ChEBI" id="CHEBI:60240"/>
    </ligand>
</feature>
<comment type="function">
    <text evidence="1">Nucleotidase that shows phosphatase activity on nucleoside 5'-monophosphates.</text>
</comment>
<comment type="catalytic activity">
    <reaction evidence="1">
        <text>a ribonucleoside 5'-phosphate + H2O = a ribonucleoside + phosphate</text>
        <dbReference type="Rhea" id="RHEA:12484"/>
        <dbReference type="ChEBI" id="CHEBI:15377"/>
        <dbReference type="ChEBI" id="CHEBI:18254"/>
        <dbReference type="ChEBI" id="CHEBI:43474"/>
        <dbReference type="ChEBI" id="CHEBI:58043"/>
        <dbReference type="EC" id="3.1.3.5"/>
    </reaction>
</comment>
<comment type="cofactor">
    <cofactor evidence="1">
        <name>a divalent metal cation</name>
        <dbReference type="ChEBI" id="CHEBI:60240"/>
    </cofactor>
    <text evidence="1">Binds 1 divalent metal cation per subunit.</text>
</comment>
<comment type="subcellular location">
    <subcellularLocation>
        <location evidence="1">Cytoplasm</location>
    </subcellularLocation>
</comment>
<comment type="similarity">
    <text evidence="1">Belongs to the SurE nucleotidase family.</text>
</comment>
<reference key="1">
    <citation type="submission" date="2005-08" db="EMBL/GenBank/DDBJ databases">
        <title>Complete sequence of chromosome 1 of Synechococcus elongatus PCC 7942.</title>
        <authorList>
            <consortium name="US DOE Joint Genome Institute"/>
            <person name="Copeland A."/>
            <person name="Lucas S."/>
            <person name="Lapidus A."/>
            <person name="Barry K."/>
            <person name="Detter J.C."/>
            <person name="Glavina T."/>
            <person name="Hammon N."/>
            <person name="Israni S."/>
            <person name="Pitluck S."/>
            <person name="Schmutz J."/>
            <person name="Larimer F."/>
            <person name="Land M."/>
            <person name="Kyrpides N."/>
            <person name="Lykidis A."/>
            <person name="Golden S."/>
            <person name="Richardson P."/>
        </authorList>
    </citation>
    <scope>NUCLEOTIDE SEQUENCE [LARGE SCALE GENOMIC DNA]</scope>
    <source>
        <strain>ATCC 33912 / PCC 7942 / FACHB-805</strain>
    </source>
</reference>
<proteinExistence type="inferred from homology"/>
<gene>
    <name evidence="1" type="primary">surE</name>
    <name type="ordered locus">Synpcc7942_2063</name>
</gene>
<sequence>MRLLISNDDGVFALGIQTLANRLVQAGHEVTVVCPDRERSATGHGLTLHKPIRAERIEGLFDPAVQVWACSGTPSDCVKLALGTLLPELPDFVLSGINHGPNLGTDVLYSGTVSAAMEGVIEGIPSIALSLASFTARDFEPAAEIAVELLERLPHPSSPKVLLSVNIPPVPKEEIAGIRLTRQGVRRYVDLFDQRVDPRGKPYFWLAGEVVEESEPQEPADSHWCDVDAIRRNYVTVTPLQYDLTHYNSLSQLDHLSR</sequence>
<accession>Q31LH6</accession>
<keyword id="KW-0963">Cytoplasm</keyword>
<keyword id="KW-0378">Hydrolase</keyword>
<keyword id="KW-0479">Metal-binding</keyword>
<keyword id="KW-0547">Nucleotide-binding</keyword>
<keyword id="KW-1185">Reference proteome</keyword>
<protein>
    <recommendedName>
        <fullName evidence="1">5'-nucleotidase SurE</fullName>
        <ecNumber evidence="1">3.1.3.5</ecNumber>
    </recommendedName>
    <alternativeName>
        <fullName evidence="1">Nucleoside 5'-monophosphate phosphohydrolase</fullName>
    </alternativeName>
</protein>
<dbReference type="EC" id="3.1.3.5" evidence="1"/>
<dbReference type="EMBL" id="CP000100">
    <property type="protein sequence ID" value="ABB58093.1"/>
    <property type="molecule type" value="Genomic_DNA"/>
</dbReference>
<dbReference type="RefSeq" id="WP_011244340.1">
    <property type="nucleotide sequence ID" value="NZ_JACJTX010000001.1"/>
</dbReference>
<dbReference type="SMR" id="Q31LH6"/>
<dbReference type="STRING" id="1140.Synpcc7942_2063"/>
<dbReference type="PaxDb" id="1140-Synpcc7942_2063"/>
<dbReference type="GeneID" id="72430939"/>
<dbReference type="KEGG" id="syf:Synpcc7942_2063"/>
<dbReference type="eggNOG" id="COG0496">
    <property type="taxonomic scope" value="Bacteria"/>
</dbReference>
<dbReference type="HOGENOM" id="CLU_045192_1_3_3"/>
<dbReference type="OrthoDB" id="9780815at2"/>
<dbReference type="BioCyc" id="SYNEL:SYNPCC7942_2063-MONOMER"/>
<dbReference type="Proteomes" id="UP000889800">
    <property type="component" value="Chromosome"/>
</dbReference>
<dbReference type="GO" id="GO:0005737">
    <property type="term" value="C:cytoplasm"/>
    <property type="evidence" value="ECO:0007669"/>
    <property type="project" value="UniProtKB-SubCell"/>
</dbReference>
<dbReference type="GO" id="GO:0008254">
    <property type="term" value="F:3'-nucleotidase activity"/>
    <property type="evidence" value="ECO:0007669"/>
    <property type="project" value="TreeGrafter"/>
</dbReference>
<dbReference type="GO" id="GO:0008253">
    <property type="term" value="F:5'-nucleotidase activity"/>
    <property type="evidence" value="ECO:0007669"/>
    <property type="project" value="UniProtKB-UniRule"/>
</dbReference>
<dbReference type="GO" id="GO:0004309">
    <property type="term" value="F:exopolyphosphatase activity"/>
    <property type="evidence" value="ECO:0007669"/>
    <property type="project" value="TreeGrafter"/>
</dbReference>
<dbReference type="GO" id="GO:0046872">
    <property type="term" value="F:metal ion binding"/>
    <property type="evidence" value="ECO:0007669"/>
    <property type="project" value="UniProtKB-UniRule"/>
</dbReference>
<dbReference type="GO" id="GO:0000166">
    <property type="term" value="F:nucleotide binding"/>
    <property type="evidence" value="ECO:0007669"/>
    <property type="project" value="UniProtKB-KW"/>
</dbReference>
<dbReference type="FunFam" id="3.40.1210.10:FF:000001">
    <property type="entry name" value="5'/3'-nucleotidase SurE"/>
    <property type="match status" value="1"/>
</dbReference>
<dbReference type="Gene3D" id="3.40.1210.10">
    <property type="entry name" value="Survival protein SurE-like phosphatase/nucleotidase"/>
    <property type="match status" value="1"/>
</dbReference>
<dbReference type="HAMAP" id="MF_00060">
    <property type="entry name" value="SurE"/>
    <property type="match status" value="1"/>
</dbReference>
<dbReference type="InterPro" id="IPR030048">
    <property type="entry name" value="SurE"/>
</dbReference>
<dbReference type="InterPro" id="IPR002828">
    <property type="entry name" value="SurE-like_Pase/nucleotidase"/>
</dbReference>
<dbReference type="InterPro" id="IPR036523">
    <property type="entry name" value="SurE-like_sf"/>
</dbReference>
<dbReference type="NCBIfam" id="NF001490">
    <property type="entry name" value="PRK00346.1-4"/>
    <property type="match status" value="1"/>
</dbReference>
<dbReference type="NCBIfam" id="NF001492">
    <property type="entry name" value="PRK00346.2-2"/>
    <property type="match status" value="1"/>
</dbReference>
<dbReference type="NCBIfam" id="TIGR00087">
    <property type="entry name" value="surE"/>
    <property type="match status" value="1"/>
</dbReference>
<dbReference type="PANTHER" id="PTHR30457">
    <property type="entry name" value="5'-NUCLEOTIDASE SURE"/>
    <property type="match status" value="1"/>
</dbReference>
<dbReference type="PANTHER" id="PTHR30457:SF12">
    <property type="entry name" value="5'_3'-NUCLEOTIDASE SURE"/>
    <property type="match status" value="1"/>
</dbReference>
<dbReference type="Pfam" id="PF01975">
    <property type="entry name" value="SurE"/>
    <property type="match status" value="1"/>
</dbReference>
<dbReference type="SUPFAM" id="SSF64167">
    <property type="entry name" value="SurE-like"/>
    <property type="match status" value="1"/>
</dbReference>
<evidence type="ECO:0000255" key="1">
    <source>
        <dbReference type="HAMAP-Rule" id="MF_00060"/>
    </source>
</evidence>